<protein>
    <recommendedName>
        <fullName evidence="1">ATP synthase subunit beta, chloroplastic</fullName>
        <ecNumber evidence="1">7.1.2.2</ecNumber>
    </recommendedName>
    <alternativeName>
        <fullName evidence="1">ATP synthase F1 sector subunit beta</fullName>
    </alternativeName>
    <alternativeName>
        <fullName evidence="1">F-ATPase subunit beta</fullName>
    </alternativeName>
</protein>
<accession>P00826</accession>
<geneLocation type="chloroplast"/>
<sequence>MRINPTTSGSGVSTLEKKNPGRVVQIIGPVLDVAFPPGKMPNIYNALVVQGRDSVGQPINVACEVQQLLGNNRVRAIAMSATEGLTRGMEVIDTGAPISVPVGGATLGRIFNVLGEPVDNLGPVDTSTTSPIHRSAPAFIQLDTKLSIFETGIEVVDLLAPYRRGGKIGLFGGAGVGKTVLIMELINNIAKAHGGVSVFGGVGERTREGNDLYMEMKESGVINEENIAESKVALVYGQMNEPPGARMRVGLTALTMAEYFRDVNEQDVLLFIDNIFRFVQAGSEVSALLGRMPSAVGYQPTLSTEMGSLQERITSTKEGSITSIQAVYVPADDLTDPAPATTFAHLDATTVLSRGLAAKGIYPAVDPLDSTSTMLQPRIVGEEHYETAQRVKQTLQRYKELQDIIAILGLDELSEEDRLLVARARKIERFLSQPFFVAEVFTGSPGKYVGLAETIRGFQLILSGELDGLPEQAFYLVGNIDEATAKAMNLEMESNLKK</sequence>
<name>ATPB_TOBAC</name>
<feature type="chain" id="PRO_0000144551" description="ATP synthase subunit beta, chloroplastic">
    <location>
        <begin position="1"/>
        <end position="498"/>
    </location>
</feature>
<feature type="binding site" evidence="1">
    <location>
        <begin position="172"/>
        <end position="179"/>
    </location>
    <ligand>
        <name>ATP</name>
        <dbReference type="ChEBI" id="CHEBI:30616"/>
    </ligand>
</feature>
<feature type="sequence conflict" description="In Ref. 3; CAA77360." evidence="2" ref="3">
    <original>I</original>
    <variation>V</variation>
    <location>
        <position position="77"/>
    </location>
</feature>
<feature type="sequence conflict" description="In Ref. 3; CAA77360." evidence="2" ref="3">
    <original>E</original>
    <variation>K</variation>
    <location>
        <position position="154"/>
    </location>
</feature>
<reference key="1">
    <citation type="journal article" date="1983" name="Gene">
        <title>Overlap and cotranscription of the genes for the beta and epsilon subunits of tobacco chloroplast ATPase.</title>
        <authorList>
            <person name="Shinozaki K."/>
            <person name="Deno H."/>
            <person name="Kato A."/>
            <person name="Sugiura M."/>
        </authorList>
    </citation>
    <scope>NUCLEOTIDE SEQUENCE [GENOMIC DNA]</scope>
</reference>
<reference key="2">
    <citation type="journal article" date="1992" name="Science">
        <title>Tentoxin sensitivity of chloroplasts determined by codon 83 of beta subunit of proton-ATPase.</title>
        <authorList>
            <person name="Avni A."/>
            <person name="Anderson J.D."/>
            <person name="Holland N."/>
            <person name="Rochaix J.-D."/>
            <person name="Gromet-Elhanan Z."/>
            <person name="Edelman M."/>
        </authorList>
    </citation>
    <scope>NUCLEOTIDE SEQUENCE [GENOMIC DNA]</scope>
    <source>
        <strain>cv. Xanthi</strain>
    </source>
</reference>
<reference key="3">
    <citation type="journal article" date="1986" name="EMBO J.">
        <title>The complete nucleotide sequence of the tobacco chloroplast genome: its gene organization and expression.</title>
        <authorList>
            <person name="Shinozaki K."/>
            <person name="Ohme M."/>
            <person name="Tanaka M."/>
            <person name="Wakasugi T."/>
            <person name="Hayashida N."/>
            <person name="Matsubayashi T."/>
            <person name="Zaita N."/>
            <person name="Chunwongse J."/>
            <person name="Obokata J."/>
            <person name="Yamaguchi-Shinozaki K."/>
            <person name="Ohto C."/>
            <person name="Torazawa K."/>
            <person name="Meng B.-Y."/>
            <person name="Sugita M."/>
            <person name="Deno H."/>
            <person name="Kamogashira T."/>
            <person name="Yamada K."/>
            <person name="Kusuda J."/>
            <person name="Takaiwa F."/>
            <person name="Kato A."/>
            <person name="Tohdoh N."/>
            <person name="Shimada H."/>
            <person name="Sugiura M."/>
        </authorList>
    </citation>
    <scope>NUCLEOTIDE SEQUENCE [LARGE SCALE GENOMIC DNA]</scope>
    <source>
        <strain>cv. Bright Yellow 4</strain>
    </source>
</reference>
<reference key="4">
    <citation type="submission" date="2005-09" db="EMBL/GenBank/DDBJ databases">
        <authorList>
            <person name="Yukawa M."/>
        </authorList>
    </citation>
    <scope>SEQUENCE REVISION</scope>
</reference>
<keyword id="KW-0066">ATP synthesis</keyword>
<keyword id="KW-0067">ATP-binding</keyword>
<keyword id="KW-0139">CF(1)</keyword>
<keyword id="KW-0150">Chloroplast</keyword>
<keyword id="KW-0375">Hydrogen ion transport</keyword>
<keyword id="KW-0406">Ion transport</keyword>
<keyword id="KW-0472">Membrane</keyword>
<keyword id="KW-0547">Nucleotide-binding</keyword>
<keyword id="KW-0934">Plastid</keyword>
<keyword id="KW-1185">Reference proteome</keyword>
<keyword id="KW-0793">Thylakoid</keyword>
<keyword id="KW-1278">Translocase</keyword>
<keyword id="KW-0813">Transport</keyword>
<dbReference type="EC" id="7.1.2.2" evidence="1"/>
<dbReference type="EMBL" id="K00507">
    <property type="protein sequence ID" value="AAA84676.1"/>
    <property type="molecule type" value="Genomic_DNA"/>
</dbReference>
<dbReference type="EMBL" id="X61319">
    <property type="protein sequence ID" value="CAA43612.1"/>
    <property type="molecule type" value="Genomic_DNA"/>
</dbReference>
<dbReference type="EMBL" id="Z00044">
    <property type="protein sequence ID" value="CAA77360.2"/>
    <property type="molecule type" value="Genomic_DNA"/>
</dbReference>
<dbReference type="PIR" id="A01027">
    <property type="entry name" value="PWNTB"/>
</dbReference>
<dbReference type="RefSeq" id="NP_054506.2">
    <property type="nucleotide sequence ID" value="NC_001879.2"/>
</dbReference>
<dbReference type="SMR" id="P00826"/>
<dbReference type="GeneID" id="800515"/>
<dbReference type="KEGG" id="nta:800515"/>
<dbReference type="OrthoDB" id="1217016at2759"/>
<dbReference type="Proteomes" id="UP000084051">
    <property type="component" value="Unplaced"/>
</dbReference>
<dbReference type="GO" id="GO:0009535">
    <property type="term" value="C:chloroplast thylakoid membrane"/>
    <property type="evidence" value="ECO:0007669"/>
    <property type="project" value="UniProtKB-SubCell"/>
</dbReference>
<dbReference type="GO" id="GO:0045259">
    <property type="term" value="C:proton-transporting ATP synthase complex"/>
    <property type="evidence" value="ECO:0007669"/>
    <property type="project" value="UniProtKB-KW"/>
</dbReference>
<dbReference type="GO" id="GO:0005524">
    <property type="term" value="F:ATP binding"/>
    <property type="evidence" value="ECO:0007669"/>
    <property type="project" value="UniProtKB-UniRule"/>
</dbReference>
<dbReference type="GO" id="GO:0016887">
    <property type="term" value="F:ATP hydrolysis activity"/>
    <property type="evidence" value="ECO:0007669"/>
    <property type="project" value="InterPro"/>
</dbReference>
<dbReference type="GO" id="GO:0046933">
    <property type="term" value="F:proton-transporting ATP synthase activity, rotational mechanism"/>
    <property type="evidence" value="ECO:0007669"/>
    <property type="project" value="UniProtKB-UniRule"/>
</dbReference>
<dbReference type="CDD" id="cd18110">
    <property type="entry name" value="ATP-synt_F1_beta_C"/>
    <property type="match status" value="1"/>
</dbReference>
<dbReference type="CDD" id="cd18115">
    <property type="entry name" value="ATP-synt_F1_beta_N"/>
    <property type="match status" value="1"/>
</dbReference>
<dbReference type="CDD" id="cd01133">
    <property type="entry name" value="F1-ATPase_beta_CD"/>
    <property type="match status" value="1"/>
</dbReference>
<dbReference type="FunFam" id="1.10.1140.10:FF:000001">
    <property type="entry name" value="ATP synthase subunit beta"/>
    <property type="match status" value="1"/>
</dbReference>
<dbReference type="FunFam" id="3.40.50.300:FF:000004">
    <property type="entry name" value="ATP synthase subunit beta"/>
    <property type="match status" value="1"/>
</dbReference>
<dbReference type="FunFam" id="2.40.10.170:FF:000002">
    <property type="entry name" value="ATP synthase subunit beta, chloroplastic"/>
    <property type="match status" value="1"/>
</dbReference>
<dbReference type="Gene3D" id="2.40.10.170">
    <property type="match status" value="1"/>
</dbReference>
<dbReference type="Gene3D" id="1.10.1140.10">
    <property type="entry name" value="Bovine Mitochondrial F1-atpase, Atp Synthase Beta Chain, Chain D, domain 3"/>
    <property type="match status" value="1"/>
</dbReference>
<dbReference type="Gene3D" id="3.40.50.300">
    <property type="entry name" value="P-loop containing nucleotide triphosphate hydrolases"/>
    <property type="match status" value="1"/>
</dbReference>
<dbReference type="HAMAP" id="MF_01347">
    <property type="entry name" value="ATP_synth_beta_bact"/>
    <property type="match status" value="1"/>
</dbReference>
<dbReference type="InterPro" id="IPR003593">
    <property type="entry name" value="AAA+_ATPase"/>
</dbReference>
<dbReference type="InterPro" id="IPR055190">
    <property type="entry name" value="ATP-synt_VA_C"/>
</dbReference>
<dbReference type="InterPro" id="IPR005722">
    <property type="entry name" value="ATP_synth_F1_bsu"/>
</dbReference>
<dbReference type="InterPro" id="IPR020003">
    <property type="entry name" value="ATPase_a/bsu_AS"/>
</dbReference>
<dbReference type="InterPro" id="IPR050053">
    <property type="entry name" value="ATPase_alpha/beta_chains"/>
</dbReference>
<dbReference type="InterPro" id="IPR004100">
    <property type="entry name" value="ATPase_F1/V1/A1_a/bsu_N"/>
</dbReference>
<dbReference type="InterPro" id="IPR036121">
    <property type="entry name" value="ATPase_F1/V1/A1_a/bsu_N_sf"/>
</dbReference>
<dbReference type="InterPro" id="IPR000194">
    <property type="entry name" value="ATPase_F1/V1/A1_a/bsu_nucl-bd"/>
</dbReference>
<dbReference type="InterPro" id="IPR024034">
    <property type="entry name" value="ATPase_F1/V1_b/a_C"/>
</dbReference>
<dbReference type="InterPro" id="IPR027417">
    <property type="entry name" value="P-loop_NTPase"/>
</dbReference>
<dbReference type="NCBIfam" id="TIGR01039">
    <property type="entry name" value="atpD"/>
    <property type="match status" value="1"/>
</dbReference>
<dbReference type="PANTHER" id="PTHR15184">
    <property type="entry name" value="ATP SYNTHASE"/>
    <property type="match status" value="1"/>
</dbReference>
<dbReference type="PANTHER" id="PTHR15184:SF71">
    <property type="entry name" value="ATP SYNTHASE SUBUNIT BETA, MITOCHONDRIAL"/>
    <property type="match status" value="1"/>
</dbReference>
<dbReference type="Pfam" id="PF00006">
    <property type="entry name" value="ATP-synt_ab"/>
    <property type="match status" value="1"/>
</dbReference>
<dbReference type="Pfam" id="PF02874">
    <property type="entry name" value="ATP-synt_ab_N"/>
    <property type="match status" value="1"/>
</dbReference>
<dbReference type="Pfam" id="PF22919">
    <property type="entry name" value="ATP-synt_VA_C"/>
    <property type="match status" value="1"/>
</dbReference>
<dbReference type="SMART" id="SM00382">
    <property type="entry name" value="AAA"/>
    <property type="match status" value="1"/>
</dbReference>
<dbReference type="SUPFAM" id="SSF47917">
    <property type="entry name" value="C-terminal domain of alpha and beta subunits of F1 ATP synthase"/>
    <property type="match status" value="1"/>
</dbReference>
<dbReference type="SUPFAM" id="SSF50615">
    <property type="entry name" value="N-terminal domain of alpha and beta subunits of F1 ATP synthase"/>
    <property type="match status" value="1"/>
</dbReference>
<dbReference type="SUPFAM" id="SSF52540">
    <property type="entry name" value="P-loop containing nucleoside triphosphate hydrolases"/>
    <property type="match status" value="1"/>
</dbReference>
<dbReference type="PROSITE" id="PS00152">
    <property type="entry name" value="ATPASE_ALPHA_BETA"/>
    <property type="match status" value="1"/>
</dbReference>
<gene>
    <name evidence="1" type="primary">atpB</name>
</gene>
<comment type="function">
    <text evidence="1">Produces ATP from ADP in the presence of a proton gradient across the membrane. The catalytic sites are hosted primarily by the beta subunits.</text>
</comment>
<comment type="catalytic activity">
    <reaction evidence="1">
        <text>ATP + H2O + 4 H(+)(in) = ADP + phosphate + 5 H(+)(out)</text>
        <dbReference type="Rhea" id="RHEA:57720"/>
        <dbReference type="ChEBI" id="CHEBI:15377"/>
        <dbReference type="ChEBI" id="CHEBI:15378"/>
        <dbReference type="ChEBI" id="CHEBI:30616"/>
        <dbReference type="ChEBI" id="CHEBI:43474"/>
        <dbReference type="ChEBI" id="CHEBI:456216"/>
        <dbReference type="EC" id="7.1.2.2"/>
    </reaction>
</comment>
<comment type="subunit">
    <text evidence="1">F-type ATPases have 2 components, CF(1) - the catalytic core - and CF(0) - the membrane proton channel. CF(1) has five subunits: alpha(3), beta(3), gamma(1), delta(1), epsilon(1). CF(0) has four main subunits: a(1), b(1), b'(1) and c(9-12).</text>
</comment>
<comment type="subcellular location">
    <subcellularLocation>
        <location evidence="1">Plastid</location>
        <location evidence="1">Chloroplast thylakoid membrane</location>
        <topology evidence="1">Peripheral membrane protein</topology>
    </subcellularLocation>
</comment>
<comment type="similarity">
    <text evidence="1">Belongs to the ATPase alpha/beta chains family.</text>
</comment>
<proteinExistence type="inferred from homology"/>
<evidence type="ECO:0000255" key="1">
    <source>
        <dbReference type="HAMAP-Rule" id="MF_01347"/>
    </source>
</evidence>
<evidence type="ECO:0000305" key="2"/>
<organism>
    <name type="scientific">Nicotiana tabacum</name>
    <name type="common">Common tobacco</name>
    <dbReference type="NCBI Taxonomy" id="4097"/>
    <lineage>
        <taxon>Eukaryota</taxon>
        <taxon>Viridiplantae</taxon>
        <taxon>Streptophyta</taxon>
        <taxon>Embryophyta</taxon>
        <taxon>Tracheophyta</taxon>
        <taxon>Spermatophyta</taxon>
        <taxon>Magnoliopsida</taxon>
        <taxon>eudicotyledons</taxon>
        <taxon>Gunneridae</taxon>
        <taxon>Pentapetalae</taxon>
        <taxon>asterids</taxon>
        <taxon>lamiids</taxon>
        <taxon>Solanales</taxon>
        <taxon>Solanaceae</taxon>
        <taxon>Nicotianoideae</taxon>
        <taxon>Nicotianeae</taxon>
        <taxon>Nicotiana</taxon>
    </lineage>
</organism>